<protein>
    <recommendedName>
        <fullName evidence="1">DNA-directed RNA polymerase subunit beta</fullName>
        <shortName evidence="1">RNAP subunit beta</shortName>
        <ecNumber evidence="1">2.7.7.6</ecNumber>
    </recommendedName>
    <alternativeName>
        <fullName evidence="1">RNA polymerase subunit beta</fullName>
    </alternativeName>
    <alternativeName>
        <fullName evidence="1">Transcriptase subunit beta</fullName>
    </alternativeName>
</protein>
<evidence type="ECO:0000255" key="1">
    <source>
        <dbReference type="HAMAP-Rule" id="MF_01321"/>
    </source>
</evidence>
<evidence type="ECO:0000256" key="2">
    <source>
        <dbReference type="SAM" id="MobiDB-lite"/>
    </source>
</evidence>
<reference key="1">
    <citation type="journal article" date="2002" name="Proc. Natl. Acad. Sci. U.S.A.">
        <title>Complete genome sequence and comparative genomic analysis of an emerging human pathogen, serotype V Streptococcus agalactiae.</title>
        <authorList>
            <person name="Tettelin H."/>
            <person name="Masignani V."/>
            <person name="Cieslewicz M.J."/>
            <person name="Eisen J.A."/>
            <person name="Peterson S.N."/>
            <person name="Wessels M.R."/>
            <person name="Paulsen I.T."/>
            <person name="Nelson K.E."/>
            <person name="Margarit I."/>
            <person name="Read T.D."/>
            <person name="Madoff L.C."/>
            <person name="Wolf A.M."/>
            <person name="Beanan M.J."/>
            <person name="Brinkac L.M."/>
            <person name="Daugherty S.C."/>
            <person name="DeBoy R.T."/>
            <person name="Durkin A.S."/>
            <person name="Kolonay J.F."/>
            <person name="Madupu R."/>
            <person name="Lewis M.R."/>
            <person name="Radune D."/>
            <person name="Fedorova N.B."/>
            <person name="Scanlan D."/>
            <person name="Khouri H.M."/>
            <person name="Mulligan S."/>
            <person name="Carty H.A."/>
            <person name="Cline R.T."/>
            <person name="Van Aken S.E."/>
            <person name="Gill J."/>
            <person name="Scarselli M."/>
            <person name="Mora M."/>
            <person name="Iacobini E.T."/>
            <person name="Brettoni C."/>
            <person name="Galli G."/>
            <person name="Mariani M."/>
            <person name="Vegni F."/>
            <person name="Maione D."/>
            <person name="Rinaudo D."/>
            <person name="Rappuoli R."/>
            <person name="Telford J.L."/>
            <person name="Kasper D.L."/>
            <person name="Grandi G."/>
            <person name="Fraser C.M."/>
        </authorList>
    </citation>
    <scope>NUCLEOTIDE SEQUENCE [LARGE SCALE GENOMIC DNA]</scope>
    <source>
        <strain>ATCC BAA-611 / 2603 V/R</strain>
    </source>
</reference>
<sequence>MAGHEVQYGKHRTRRSFSRIKEVLDLPNLIEIQTDSFQDFLDAGLKEVFEDVLPISNFTDTMDLEFVGYELKEPKYTLEEARIHDASYSAPIFVTFRLVNKETGEIKTQEVFFGDFPIMTEMGTFIINGGERIIVSQLVRSPGVYFNDKVDKNGKVGYGSTVIPNRGAWLELETDAKDIAYTRIDRTRKIPFTTLVRALGFSGDDEIVDIFGDSELVRNTIEKDIHKNPSDSRTDEALKEIYERLRPGEPKTADSSRSLLVARFFDPRRYDLAAVGRYKINKKLNLKTRLLNQTIAENLVDGETGEILVEAGTVMTRDVIDSIAEHIDGDLNKFVYTPNDYAVVTEPVILQKFKVVAPTDPDRVVTIVGNSNPEDKVRALTPADILAEMSYFLNLAEGIGKVDDIDHLGNRRIRAVGELLANQFRIGLARMERNVRERMSVQDNEVLTPQQIINIRPVTAAVKEFFGSSQLSQFMDQHNPLSELSHKRRLSALGPGGLTRDRAGYEVRDVHYTHYGRMCPIETPEGPNIGLINNLSSFGHLNKYGFIQTPYRKVDRSTGAVTNEIVWLTADEEDEFTVAQANSKLNEDGTFAEEIVMGRHQGNNQEFPSSIVDFVDVSPKQVVAVATACIPFLENDDSNRALMGANMQRQAVPLIDPKAPYVGTGMEYQAAHDSGAAVIAKHDGRVIFSDAEKVEVRREDGSLDVYHVQKFRRSNSGTAYNQRTLVKVGDLVEKGDFIADGPSMENGEMALGQNPVVAYMTWEGYNFEDAVIMSERLVKEDVYTSVHLEEFESETRDTKLGPEEITREIPNVGEDSLRDLDEMGIIRIGAEVKEGDILVGKVTPKGEKDLSAEERLLHAIFGDKSREVRDTSLRVPHGGDGVVRDVKIFTRANGDELQSGVNMLVRVYIAQKRKIKVGDKMAGRHGNKGVVSRIVPVEDMPYLPDGTPVDIMLNPLGVPSRMNIGQVMELHLGMAARNLGIHIATPVFDGASSEDLWETVQEAGMDSDAKTVLYDGRTGEPFDNRVSVGVMYMIKLHHMVDDKLHARSVGPYSLVTQQPLGGKAQFGGQRFGEMEVWALEAYGASNVLQEILTYKSDDVTGRLKAYEAITKGKPIPKPGVPESFRVLVKELQSLGLDMRVLDEDDNEVELRDLDEGEDDDVMHVDDLEKARVKQEAEEKQAEQVSEVVQED</sequence>
<name>RPOB_STRA5</name>
<gene>
    <name evidence="1" type="primary">rpoB</name>
    <name type="ordered locus">SAG0160</name>
</gene>
<keyword id="KW-0240">DNA-directed RNA polymerase</keyword>
<keyword id="KW-0548">Nucleotidyltransferase</keyword>
<keyword id="KW-1185">Reference proteome</keyword>
<keyword id="KW-0804">Transcription</keyword>
<keyword id="KW-0808">Transferase</keyword>
<dbReference type="EC" id="2.7.7.6" evidence="1"/>
<dbReference type="EMBL" id="AE009948">
    <property type="protein sequence ID" value="AAM99067.1"/>
    <property type="molecule type" value="Genomic_DNA"/>
</dbReference>
<dbReference type="RefSeq" id="NP_687195.1">
    <property type="nucleotide sequence ID" value="NC_004116.1"/>
</dbReference>
<dbReference type="RefSeq" id="WP_000907191.1">
    <property type="nucleotide sequence ID" value="NC_004116.1"/>
</dbReference>
<dbReference type="SMR" id="Q8E239"/>
<dbReference type="STRING" id="208435.SAG0160"/>
<dbReference type="GeneID" id="66885141"/>
<dbReference type="KEGG" id="sag:SAG0160"/>
<dbReference type="PATRIC" id="fig|208435.3.peg.160"/>
<dbReference type="HOGENOM" id="CLU_000524_4_1_9"/>
<dbReference type="OrthoDB" id="9803954at2"/>
<dbReference type="Proteomes" id="UP000000821">
    <property type="component" value="Chromosome"/>
</dbReference>
<dbReference type="GO" id="GO:0000428">
    <property type="term" value="C:DNA-directed RNA polymerase complex"/>
    <property type="evidence" value="ECO:0007669"/>
    <property type="project" value="UniProtKB-KW"/>
</dbReference>
<dbReference type="GO" id="GO:0003677">
    <property type="term" value="F:DNA binding"/>
    <property type="evidence" value="ECO:0007669"/>
    <property type="project" value="UniProtKB-UniRule"/>
</dbReference>
<dbReference type="GO" id="GO:0003899">
    <property type="term" value="F:DNA-directed RNA polymerase activity"/>
    <property type="evidence" value="ECO:0007669"/>
    <property type="project" value="UniProtKB-UniRule"/>
</dbReference>
<dbReference type="GO" id="GO:0032549">
    <property type="term" value="F:ribonucleoside binding"/>
    <property type="evidence" value="ECO:0007669"/>
    <property type="project" value="InterPro"/>
</dbReference>
<dbReference type="GO" id="GO:0006351">
    <property type="term" value="P:DNA-templated transcription"/>
    <property type="evidence" value="ECO:0007669"/>
    <property type="project" value="UniProtKB-UniRule"/>
</dbReference>
<dbReference type="CDD" id="cd00653">
    <property type="entry name" value="RNA_pol_B_RPB2"/>
    <property type="match status" value="1"/>
</dbReference>
<dbReference type="Gene3D" id="2.40.50.100">
    <property type="match status" value="1"/>
</dbReference>
<dbReference type="Gene3D" id="2.40.50.150">
    <property type="match status" value="1"/>
</dbReference>
<dbReference type="Gene3D" id="3.90.1100.10">
    <property type="match status" value="1"/>
</dbReference>
<dbReference type="Gene3D" id="2.30.150.10">
    <property type="entry name" value="DNA-directed RNA polymerase, beta subunit, external 1 domain"/>
    <property type="match status" value="1"/>
</dbReference>
<dbReference type="Gene3D" id="2.40.270.10">
    <property type="entry name" value="DNA-directed RNA polymerase, subunit 2, domain 6"/>
    <property type="match status" value="1"/>
</dbReference>
<dbReference type="Gene3D" id="3.90.1800.10">
    <property type="entry name" value="RNA polymerase alpha subunit dimerisation domain"/>
    <property type="match status" value="1"/>
</dbReference>
<dbReference type="Gene3D" id="3.90.1110.10">
    <property type="entry name" value="RNA polymerase Rpb2, domain 2"/>
    <property type="match status" value="1"/>
</dbReference>
<dbReference type="HAMAP" id="MF_01321">
    <property type="entry name" value="RNApol_bact_RpoB"/>
    <property type="match status" value="1"/>
</dbReference>
<dbReference type="InterPro" id="IPR042107">
    <property type="entry name" value="DNA-dir_RNA_pol_bsu_ext_1_sf"/>
</dbReference>
<dbReference type="InterPro" id="IPR019462">
    <property type="entry name" value="DNA-dir_RNA_pol_bsu_external_1"/>
</dbReference>
<dbReference type="InterPro" id="IPR015712">
    <property type="entry name" value="DNA-dir_RNA_pol_su2"/>
</dbReference>
<dbReference type="InterPro" id="IPR007120">
    <property type="entry name" value="DNA-dir_RNAP_su2_dom"/>
</dbReference>
<dbReference type="InterPro" id="IPR037033">
    <property type="entry name" value="DNA-dir_RNAP_su2_hyb_sf"/>
</dbReference>
<dbReference type="InterPro" id="IPR010243">
    <property type="entry name" value="RNA_pol_bsu_bac"/>
</dbReference>
<dbReference type="InterPro" id="IPR007121">
    <property type="entry name" value="RNA_pol_bsu_CS"/>
</dbReference>
<dbReference type="InterPro" id="IPR007644">
    <property type="entry name" value="RNA_pol_bsu_protrusion"/>
</dbReference>
<dbReference type="InterPro" id="IPR007642">
    <property type="entry name" value="RNA_pol_Rpb2_2"/>
</dbReference>
<dbReference type="InterPro" id="IPR037034">
    <property type="entry name" value="RNA_pol_Rpb2_2_sf"/>
</dbReference>
<dbReference type="InterPro" id="IPR007645">
    <property type="entry name" value="RNA_pol_Rpb2_3"/>
</dbReference>
<dbReference type="InterPro" id="IPR007641">
    <property type="entry name" value="RNA_pol_Rpb2_7"/>
</dbReference>
<dbReference type="InterPro" id="IPR014724">
    <property type="entry name" value="RNA_pol_RPB2_OB-fold"/>
</dbReference>
<dbReference type="NCBIfam" id="NF001616">
    <property type="entry name" value="PRK00405.1"/>
    <property type="match status" value="1"/>
</dbReference>
<dbReference type="NCBIfam" id="TIGR02013">
    <property type="entry name" value="rpoB"/>
    <property type="match status" value="1"/>
</dbReference>
<dbReference type="PANTHER" id="PTHR20856">
    <property type="entry name" value="DNA-DIRECTED RNA POLYMERASE I SUBUNIT 2"/>
    <property type="match status" value="1"/>
</dbReference>
<dbReference type="Pfam" id="PF04563">
    <property type="entry name" value="RNA_pol_Rpb2_1"/>
    <property type="match status" value="1"/>
</dbReference>
<dbReference type="Pfam" id="PF04561">
    <property type="entry name" value="RNA_pol_Rpb2_2"/>
    <property type="match status" value="2"/>
</dbReference>
<dbReference type="Pfam" id="PF04565">
    <property type="entry name" value="RNA_pol_Rpb2_3"/>
    <property type="match status" value="1"/>
</dbReference>
<dbReference type="Pfam" id="PF10385">
    <property type="entry name" value="RNA_pol_Rpb2_45"/>
    <property type="match status" value="1"/>
</dbReference>
<dbReference type="Pfam" id="PF00562">
    <property type="entry name" value="RNA_pol_Rpb2_6"/>
    <property type="match status" value="1"/>
</dbReference>
<dbReference type="Pfam" id="PF04560">
    <property type="entry name" value="RNA_pol_Rpb2_7"/>
    <property type="match status" value="1"/>
</dbReference>
<dbReference type="SUPFAM" id="SSF64484">
    <property type="entry name" value="beta and beta-prime subunits of DNA dependent RNA-polymerase"/>
    <property type="match status" value="1"/>
</dbReference>
<dbReference type="PROSITE" id="PS01166">
    <property type="entry name" value="RNA_POL_BETA"/>
    <property type="match status" value="1"/>
</dbReference>
<organism>
    <name type="scientific">Streptococcus agalactiae serotype V (strain ATCC BAA-611 / 2603 V/R)</name>
    <dbReference type="NCBI Taxonomy" id="208435"/>
    <lineage>
        <taxon>Bacteria</taxon>
        <taxon>Bacillati</taxon>
        <taxon>Bacillota</taxon>
        <taxon>Bacilli</taxon>
        <taxon>Lactobacillales</taxon>
        <taxon>Streptococcaceae</taxon>
        <taxon>Streptococcus</taxon>
    </lineage>
</organism>
<comment type="function">
    <text evidence="1">DNA-dependent RNA polymerase catalyzes the transcription of DNA into RNA using the four ribonucleoside triphosphates as substrates.</text>
</comment>
<comment type="catalytic activity">
    <reaction evidence="1">
        <text>RNA(n) + a ribonucleoside 5'-triphosphate = RNA(n+1) + diphosphate</text>
        <dbReference type="Rhea" id="RHEA:21248"/>
        <dbReference type="Rhea" id="RHEA-COMP:14527"/>
        <dbReference type="Rhea" id="RHEA-COMP:17342"/>
        <dbReference type="ChEBI" id="CHEBI:33019"/>
        <dbReference type="ChEBI" id="CHEBI:61557"/>
        <dbReference type="ChEBI" id="CHEBI:140395"/>
        <dbReference type="EC" id="2.7.7.6"/>
    </reaction>
</comment>
<comment type="subunit">
    <text evidence="1">The RNAP catalytic core consists of 2 alpha, 1 beta, 1 beta' and 1 omega subunit. When a sigma factor is associated with the core the holoenzyme is formed, which can initiate transcription.</text>
</comment>
<comment type="similarity">
    <text evidence="1">Belongs to the RNA polymerase beta chain family.</text>
</comment>
<accession>Q8E239</accession>
<proteinExistence type="inferred from homology"/>
<feature type="chain" id="PRO_0000047970" description="DNA-directed RNA polymerase subunit beta">
    <location>
        <begin position="1"/>
        <end position="1191"/>
    </location>
</feature>
<feature type="region of interest" description="Disordered" evidence="2">
    <location>
        <begin position="1171"/>
        <end position="1191"/>
    </location>
</feature>
<feature type="compositionally biased region" description="Basic and acidic residues" evidence="2">
    <location>
        <begin position="1171"/>
        <end position="1181"/>
    </location>
</feature>
<feature type="compositionally biased region" description="Low complexity" evidence="2">
    <location>
        <begin position="1182"/>
        <end position="1191"/>
    </location>
</feature>